<proteinExistence type="inferred from homology"/>
<evidence type="ECO:0000250" key="1">
    <source>
        <dbReference type="UniProtKB" id="P00395"/>
    </source>
</evidence>
<evidence type="ECO:0000250" key="2">
    <source>
        <dbReference type="UniProtKB" id="P00396"/>
    </source>
</evidence>
<evidence type="ECO:0000250" key="3">
    <source>
        <dbReference type="UniProtKB" id="P00401"/>
    </source>
</evidence>
<evidence type="ECO:0000305" key="4"/>
<comment type="function">
    <text evidence="3">Component of the cytochrome c oxidase, the last enzyme in the mitochondrial electron transport chain which drives oxidative phosphorylation. The respiratory chain contains 3 multisubunit complexes succinate dehydrogenase (complex II, CII), ubiquinol-cytochrome c oxidoreductase (cytochrome b-c1 complex, complex III, CIII) and cytochrome c oxidase (complex IV, CIV), that cooperate to transfer electrons derived from NADH and succinate to molecular oxygen, creating an electrochemical gradient over the inner membrane that drives transmembrane transport and the ATP synthase. Cytochrome c oxidase is the component of the respiratory chain that catalyzes the reduction of oxygen to water. Electrons originating from reduced cytochrome c in the intermembrane space (IMS) are transferred via the dinuclear copper A center (CU(A)) of subunit 2 and heme A of subunit 1 to the active site in subunit 1, a binuclear center (BNC) formed by heme A3 and copper B (CU(B)). The BNC reduces molecular oxygen to 2 water molecules using 4 electrons from cytochrome c in the IMS and 4 protons from the mitochondrial matrix.</text>
</comment>
<comment type="catalytic activity">
    <reaction evidence="3">
        <text>4 Fe(II)-[cytochrome c] + O2 + 8 H(+)(in) = 4 Fe(III)-[cytochrome c] + 2 H2O + 4 H(+)(out)</text>
        <dbReference type="Rhea" id="RHEA:11436"/>
        <dbReference type="Rhea" id="RHEA-COMP:10350"/>
        <dbReference type="Rhea" id="RHEA-COMP:14399"/>
        <dbReference type="ChEBI" id="CHEBI:15377"/>
        <dbReference type="ChEBI" id="CHEBI:15378"/>
        <dbReference type="ChEBI" id="CHEBI:15379"/>
        <dbReference type="ChEBI" id="CHEBI:29033"/>
        <dbReference type="ChEBI" id="CHEBI:29034"/>
        <dbReference type="EC" id="7.1.1.9"/>
    </reaction>
    <physiologicalReaction direction="left-to-right" evidence="3">
        <dbReference type="Rhea" id="RHEA:11437"/>
    </physiologicalReaction>
</comment>
<comment type="cofactor">
    <cofactor evidence="2">
        <name>heme</name>
        <dbReference type="ChEBI" id="CHEBI:30413"/>
    </cofactor>
    <text evidence="2">Binds 2 heme A groups non-covalently per subunit.</text>
</comment>
<comment type="cofactor">
    <cofactor evidence="2">
        <name>Cu cation</name>
        <dbReference type="ChEBI" id="CHEBI:23378"/>
    </cofactor>
    <text evidence="2">Binds a copper B center.</text>
</comment>
<comment type="pathway">
    <text evidence="3">Energy metabolism; oxidative phosphorylation.</text>
</comment>
<comment type="subunit">
    <text evidence="1 2">Component of the cytochrome c oxidase (complex IV, CIV), a multisubunit enzyme composed of 14 subunits. The complex is composed of a catalytic core of 3 subunits MT-CO1, MT-CO2 and MT-CO3, encoded in the mitochondrial DNA, and 11 supernumerary subunits COX4I, COX5A, COX5B, COX6A, COX6B, COX6C, COX7A, COX7B, COX7C, COX8 and NDUFA4, which are encoded in the nuclear genome. The complex exists as a monomer or a dimer and forms supercomplexes (SCs) in the inner mitochondrial membrane with NADH-ubiquinone oxidoreductase (complex I, CI) and ubiquinol-cytochrome c oxidoreductase (cytochrome b-c1 complex, complex III, CIII), resulting in different assemblies (supercomplex SCI(1)III(2)IV(1) and megacomplex MCI(2)III(2)IV(2)) (By similarity). As a newly synthesized protein, rapidly incorporates into a multi-subunit assembly intermediate in the inner membrane, called MITRAC (mitochondrial translation regulation assembly intermediate of cytochrome c oxidase) complex, whose core components are COA3/MITRAC12 and COX14. Within the MITRAC complex, interacts with COA3 and with SMIM20/MITRAC7; the interaction with SMIM20 stabilizes the newly synthesized MT-CO1 and prevents its premature turnover. Interacts with TMEM177 in a COX20-dependent manner (By similarity).</text>
</comment>
<comment type="subcellular location">
    <subcellularLocation>
        <location evidence="2">Mitochondrion inner membrane</location>
        <topology evidence="2">Multi-pass membrane protein</topology>
    </subcellularLocation>
</comment>
<comment type="similarity">
    <text evidence="4">Belongs to the heme-copper respiratory oxidase family.</text>
</comment>
<name>COX1_PHOVI</name>
<protein>
    <recommendedName>
        <fullName>Cytochrome c oxidase subunit 1</fullName>
        <ecNumber>7.1.1.9</ecNumber>
    </recommendedName>
    <alternativeName>
        <fullName>Cytochrome c oxidase polypeptide I</fullName>
    </alternativeName>
</protein>
<gene>
    <name type="primary">MT-CO1</name>
    <name type="synonym">COI</name>
    <name type="synonym">COXI</name>
    <name type="synonym">MTCO1</name>
</gene>
<organism>
    <name type="scientific">Phoca vitulina</name>
    <name type="common">Harbor seal</name>
    <dbReference type="NCBI Taxonomy" id="9720"/>
    <lineage>
        <taxon>Eukaryota</taxon>
        <taxon>Metazoa</taxon>
        <taxon>Chordata</taxon>
        <taxon>Craniata</taxon>
        <taxon>Vertebrata</taxon>
        <taxon>Euteleostomi</taxon>
        <taxon>Mammalia</taxon>
        <taxon>Eutheria</taxon>
        <taxon>Laurasiatheria</taxon>
        <taxon>Carnivora</taxon>
        <taxon>Caniformia</taxon>
        <taxon>Pinnipedia</taxon>
        <taxon>Phocidae</taxon>
        <taxon>Phocinae</taxon>
        <taxon>Phoca</taxon>
    </lineage>
</organism>
<sequence length="514" mass="56983">MFMNRWLFSTNHKDIGTLYLLFGAWAGMVGTALSLLIRAELGQPGALLGDDQIYNVIVTAHAFVMIFFMVMPIMIGGFGNWLVPLMIGAPDMAFPRMNNMSFWLLPPSFLLLLASSMVEAGAGTGWTVYPPLAGNLAHAGASVDLTIFSLHLAGVSSILGAINFITTIINMKPPAMSQYQTPLFVWSVLITAVLLLLSLPVLAAGITMLLTDRNLNTTFFDPAGGGDPILYQHLFWFFGHPEVYILILPGFGMISHIVTYYSGKKEPFGYMGMVWAMMSIGFLGFIVWAHHMFTVGMDVDTRAYFTSATMIIAIPTGVKVFSWLATLHGGNIKWSPAMLWALGFIFLFTVGGLTGIVLANSSLDIVLHDTYYVVAHFHYVLSMGAVFAIMGGFVHWFPLFSGYMLDDTWAKIHFTIMFVGVNMTFFPQHFLGLSGMPRRYSDYPDAYTTWNTVSSMGSFISLTAVMLMVFMIWEAFASKREVAAVELTTTNIEWLHGCPPPYHTFEEPTYVVLK</sequence>
<feature type="chain" id="PRO_0000183388" description="Cytochrome c oxidase subunit 1">
    <location>
        <begin position="1"/>
        <end position="514"/>
    </location>
</feature>
<feature type="topological domain" description="Mitochondrial matrix" evidence="2">
    <location>
        <begin position="1"/>
        <end position="11"/>
    </location>
</feature>
<feature type="transmembrane region" description="Helical; Name=I" evidence="2">
    <location>
        <begin position="12"/>
        <end position="40"/>
    </location>
</feature>
<feature type="topological domain" description="Mitochondrial intermembrane" evidence="2">
    <location>
        <begin position="41"/>
        <end position="50"/>
    </location>
</feature>
<feature type="transmembrane region" description="Helical; Name=II" evidence="2">
    <location>
        <begin position="51"/>
        <end position="86"/>
    </location>
</feature>
<feature type="topological domain" description="Mitochondrial matrix" evidence="2">
    <location>
        <begin position="87"/>
        <end position="94"/>
    </location>
</feature>
<feature type="transmembrane region" description="Helical; Name=III" evidence="2">
    <location>
        <begin position="95"/>
        <end position="117"/>
    </location>
</feature>
<feature type="topological domain" description="Mitochondrial intermembrane" evidence="2">
    <location>
        <begin position="118"/>
        <end position="140"/>
    </location>
</feature>
<feature type="transmembrane region" description="Helical; Name=IV" evidence="2">
    <location>
        <begin position="141"/>
        <end position="170"/>
    </location>
</feature>
<feature type="topological domain" description="Mitochondrial matrix" evidence="2">
    <location>
        <begin position="171"/>
        <end position="182"/>
    </location>
</feature>
<feature type="transmembrane region" description="Helical; Name=V" evidence="2">
    <location>
        <begin position="183"/>
        <end position="212"/>
    </location>
</feature>
<feature type="topological domain" description="Mitochondrial intermembrane" evidence="2">
    <location>
        <begin position="213"/>
        <end position="227"/>
    </location>
</feature>
<feature type="transmembrane region" description="Helical; Name=VI" evidence="2">
    <location>
        <begin position="228"/>
        <end position="261"/>
    </location>
</feature>
<feature type="topological domain" description="Mitochondrial matrix" evidence="2">
    <location>
        <begin position="262"/>
        <end position="269"/>
    </location>
</feature>
<feature type="transmembrane region" description="Helical; Name=VII" evidence="2">
    <location>
        <begin position="270"/>
        <end position="286"/>
    </location>
</feature>
<feature type="topological domain" description="Mitochondrial intermembrane" evidence="2">
    <location>
        <begin position="287"/>
        <end position="298"/>
    </location>
</feature>
<feature type="transmembrane region" description="Helical; Name=VIII" evidence="2">
    <location>
        <begin position="299"/>
        <end position="327"/>
    </location>
</feature>
<feature type="topological domain" description="Mitochondrial matrix" evidence="2">
    <location>
        <begin position="328"/>
        <end position="335"/>
    </location>
</feature>
<feature type="transmembrane region" description="Helical; Name=IX" evidence="2">
    <location>
        <begin position="336"/>
        <end position="357"/>
    </location>
</feature>
<feature type="topological domain" description="Mitochondrial intermembrane" evidence="2">
    <location>
        <begin position="358"/>
        <end position="370"/>
    </location>
</feature>
<feature type="transmembrane region" description="Helical; Name=X" evidence="2">
    <location>
        <begin position="371"/>
        <end position="400"/>
    </location>
</feature>
<feature type="topological domain" description="Mitochondrial matrix" evidence="2">
    <location>
        <begin position="401"/>
        <end position="406"/>
    </location>
</feature>
<feature type="transmembrane region" description="Helical; Name=XI" evidence="2">
    <location>
        <begin position="407"/>
        <end position="433"/>
    </location>
</feature>
<feature type="topological domain" description="Mitochondrial intermembrane" evidence="2">
    <location>
        <begin position="434"/>
        <end position="446"/>
    </location>
</feature>
<feature type="transmembrane region" description="Helical; Name=XII" evidence="2">
    <location>
        <begin position="447"/>
        <end position="478"/>
    </location>
</feature>
<feature type="topological domain" description="Mitochondrial matrix" evidence="2">
    <location>
        <begin position="479"/>
        <end position="514"/>
    </location>
</feature>
<feature type="binding site" evidence="2">
    <location>
        <position position="40"/>
    </location>
    <ligand>
        <name>Na(+)</name>
        <dbReference type="ChEBI" id="CHEBI:29101"/>
    </ligand>
</feature>
<feature type="binding site" evidence="2">
    <location>
        <position position="45"/>
    </location>
    <ligand>
        <name>Na(+)</name>
        <dbReference type="ChEBI" id="CHEBI:29101"/>
    </ligand>
</feature>
<feature type="binding site" description="axial binding residue" evidence="2">
    <location>
        <position position="61"/>
    </location>
    <ligand>
        <name>Fe(II)-heme a</name>
        <dbReference type="ChEBI" id="CHEBI:61715"/>
        <note>low-spin</note>
    </ligand>
    <ligandPart>
        <name>Fe</name>
        <dbReference type="ChEBI" id="CHEBI:18248"/>
    </ligandPart>
</feature>
<feature type="binding site" evidence="2">
    <location>
        <position position="240"/>
    </location>
    <ligand>
        <name>Cu cation</name>
        <dbReference type="ChEBI" id="CHEBI:23378"/>
        <label>B</label>
    </ligand>
</feature>
<feature type="binding site" evidence="2">
    <location>
        <position position="244"/>
    </location>
    <ligand>
        <name>O2</name>
        <dbReference type="ChEBI" id="CHEBI:15379"/>
    </ligand>
</feature>
<feature type="binding site" evidence="2">
    <location>
        <position position="290"/>
    </location>
    <ligand>
        <name>Cu cation</name>
        <dbReference type="ChEBI" id="CHEBI:23378"/>
        <label>B</label>
    </ligand>
</feature>
<feature type="binding site" evidence="2">
    <location>
        <position position="291"/>
    </location>
    <ligand>
        <name>Cu cation</name>
        <dbReference type="ChEBI" id="CHEBI:23378"/>
        <label>B</label>
    </ligand>
</feature>
<feature type="binding site" evidence="2">
    <location>
        <position position="368"/>
    </location>
    <ligand>
        <name>Mg(2+)</name>
        <dbReference type="ChEBI" id="CHEBI:18420"/>
        <note>ligand shared with MT-CO2</note>
    </ligand>
</feature>
<feature type="binding site" evidence="2">
    <location>
        <position position="369"/>
    </location>
    <ligand>
        <name>Mg(2+)</name>
        <dbReference type="ChEBI" id="CHEBI:18420"/>
        <note>ligand shared with MT-CO2</note>
    </ligand>
</feature>
<feature type="binding site" description="axial binding residue" evidence="2">
    <location>
        <position position="376"/>
    </location>
    <ligand>
        <name>heme a3</name>
        <dbReference type="ChEBI" id="CHEBI:83282"/>
        <note>high-spin</note>
    </ligand>
    <ligandPart>
        <name>Fe</name>
        <dbReference type="ChEBI" id="CHEBI:18248"/>
    </ligandPart>
</feature>
<feature type="binding site" description="axial binding residue" evidence="2">
    <location>
        <position position="378"/>
    </location>
    <ligand>
        <name>Fe(II)-heme a</name>
        <dbReference type="ChEBI" id="CHEBI:61715"/>
        <note>low-spin</note>
    </ligand>
    <ligandPart>
        <name>Fe</name>
        <dbReference type="ChEBI" id="CHEBI:18248"/>
    </ligandPart>
</feature>
<feature type="binding site" evidence="2">
    <location>
        <position position="441"/>
    </location>
    <ligand>
        <name>Na(+)</name>
        <dbReference type="ChEBI" id="CHEBI:29101"/>
    </ligand>
</feature>
<feature type="cross-link" description="1'-histidyl-3'-tyrosine (His-Tyr)" evidence="2">
    <location>
        <begin position="240"/>
        <end position="244"/>
    </location>
</feature>
<dbReference type="EC" id="7.1.1.9"/>
<dbReference type="EMBL" id="X63726">
    <property type="protein sequence ID" value="CAA45259.1"/>
    <property type="molecule type" value="Genomic_DNA"/>
</dbReference>
<dbReference type="EMBL" id="AM181032">
    <property type="protein sequence ID" value="CAJ57081.1"/>
    <property type="molecule type" value="Genomic_DNA"/>
</dbReference>
<dbReference type="PIR" id="S26153">
    <property type="entry name" value="S26153"/>
</dbReference>
<dbReference type="SMR" id="Q00527"/>
<dbReference type="CTD" id="4512"/>
<dbReference type="OrthoDB" id="13758at33554"/>
<dbReference type="UniPathway" id="UPA00705"/>
<dbReference type="GO" id="GO:0005743">
    <property type="term" value="C:mitochondrial inner membrane"/>
    <property type="evidence" value="ECO:0007669"/>
    <property type="project" value="UniProtKB-SubCell"/>
</dbReference>
<dbReference type="GO" id="GO:0045277">
    <property type="term" value="C:respiratory chain complex IV"/>
    <property type="evidence" value="ECO:0000250"/>
    <property type="project" value="UniProtKB"/>
</dbReference>
<dbReference type="GO" id="GO:0004129">
    <property type="term" value="F:cytochrome-c oxidase activity"/>
    <property type="evidence" value="ECO:0007669"/>
    <property type="project" value="UniProtKB-EC"/>
</dbReference>
<dbReference type="GO" id="GO:0020037">
    <property type="term" value="F:heme binding"/>
    <property type="evidence" value="ECO:0007669"/>
    <property type="project" value="InterPro"/>
</dbReference>
<dbReference type="GO" id="GO:0046872">
    <property type="term" value="F:metal ion binding"/>
    <property type="evidence" value="ECO:0007669"/>
    <property type="project" value="UniProtKB-KW"/>
</dbReference>
<dbReference type="GO" id="GO:0015990">
    <property type="term" value="P:electron transport coupled proton transport"/>
    <property type="evidence" value="ECO:0007669"/>
    <property type="project" value="TreeGrafter"/>
</dbReference>
<dbReference type="GO" id="GO:0006123">
    <property type="term" value="P:mitochondrial electron transport, cytochrome c to oxygen"/>
    <property type="evidence" value="ECO:0007669"/>
    <property type="project" value="TreeGrafter"/>
</dbReference>
<dbReference type="CDD" id="cd01663">
    <property type="entry name" value="Cyt_c_Oxidase_I"/>
    <property type="match status" value="1"/>
</dbReference>
<dbReference type="FunFam" id="1.20.210.10:FF:000001">
    <property type="entry name" value="Cytochrome c oxidase subunit 1"/>
    <property type="match status" value="1"/>
</dbReference>
<dbReference type="Gene3D" id="1.20.210.10">
    <property type="entry name" value="Cytochrome c oxidase-like, subunit I domain"/>
    <property type="match status" value="1"/>
</dbReference>
<dbReference type="InterPro" id="IPR023616">
    <property type="entry name" value="Cyt_c_oxase-like_su1_dom"/>
</dbReference>
<dbReference type="InterPro" id="IPR036927">
    <property type="entry name" value="Cyt_c_oxase-like_su1_sf"/>
</dbReference>
<dbReference type="InterPro" id="IPR000883">
    <property type="entry name" value="Cyt_C_Oxase_1"/>
</dbReference>
<dbReference type="InterPro" id="IPR023615">
    <property type="entry name" value="Cyt_c_Oxase_su1_BS"/>
</dbReference>
<dbReference type="InterPro" id="IPR033944">
    <property type="entry name" value="Cyt_c_oxase_su1_dom"/>
</dbReference>
<dbReference type="PANTHER" id="PTHR10422">
    <property type="entry name" value="CYTOCHROME C OXIDASE SUBUNIT 1"/>
    <property type="match status" value="1"/>
</dbReference>
<dbReference type="PANTHER" id="PTHR10422:SF18">
    <property type="entry name" value="CYTOCHROME C OXIDASE SUBUNIT 1"/>
    <property type="match status" value="1"/>
</dbReference>
<dbReference type="Pfam" id="PF00115">
    <property type="entry name" value="COX1"/>
    <property type="match status" value="1"/>
</dbReference>
<dbReference type="PRINTS" id="PR01165">
    <property type="entry name" value="CYCOXIDASEI"/>
</dbReference>
<dbReference type="SUPFAM" id="SSF81442">
    <property type="entry name" value="Cytochrome c oxidase subunit I-like"/>
    <property type="match status" value="1"/>
</dbReference>
<dbReference type="PROSITE" id="PS50855">
    <property type="entry name" value="COX1"/>
    <property type="match status" value="1"/>
</dbReference>
<dbReference type="PROSITE" id="PS00077">
    <property type="entry name" value="COX1_CUB"/>
    <property type="match status" value="1"/>
</dbReference>
<reference key="1">
    <citation type="journal article" date="1992" name="J. Mol. Evol.">
        <title>The complete mitochondrial DNA sequence of the harbor seal, Phoca vitulina.</title>
        <authorList>
            <person name="Arnason U."/>
            <person name="Johnsson E."/>
        </authorList>
    </citation>
    <scope>NUCLEOTIDE SEQUENCE [GENOMIC DNA]</scope>
</reference>
<reference key="2">
    <citation type="journal article" date="2006" name="Mol. Phylogenet. Evol.">
        <title>Pinniped phylogeny and a new hypothesis for their origin and dispersal.</title>
        <authorList>
            <person name="Arnason U."/>
            <person name="Gullberg A."/>
            <person name="Janke A."/>
            <person name="Kullberg M."/>
            <person name="Lehman N."/>
            <person name="Petrov E.A."/>
            <person name="Vainola R."/>
        </authorList>
    </citation>
    <scope>NUCLEOTIDE SEQUENCE [GENOMIC DNA]</scope>
</reference>
<accession>Q00527</accession>
<accession>Q08H17</accession>
<geneLocation type="mitochondrion"/>
<keyword id="KW-0106">Calcium</keyword>
<keyword id="KW-0186">Copper</keyword>
<keyword id="KW-0249">Electron transport</keyword>
<keyword id="KW-0349">Heme</keyword>
<keyword id="KW-0408">Iron</keyword>
<keyword id="KW-0460">Magnesium</keyword>
<keyword id="KW-0472">Membrane</keyword>
<keyword id="KW-0479">Metal-binding</keyword>
<keyword id="KW-0496">Mitochondrion</keyword>
<keyword id="KW-0999">Mitochondrion inner membrane</keyword>
<keyword id="KW-0679">Respiratory chain</keyword>
<keyword id="KW-0915">Sodium</keyword>
<keyword id="KW-1278">Translocase</keyword>
<keyword id="KW-0812">Transmembrane</keyword>
<keyword id="KW-1133">Transmembrane helix</keyword>
<keyword id="KW-0813">Transport</keyword>